<accession>Q8KRT5</accession>
<accession>D3VB60</accession>
<proteinExistence type="inferred from homology"/>
<evidence type="ECO:0000250" key="1">
    <source>
        <dbReference type="UniProtKB" id="P50389"/>
    </source>
</evidence>
<evidence type="ECO:0000255" key="2">
    <source>
        <dbReference type="HAMAP-Rule" id="MF_01627"/>
    </source>
</evidence>
<sequence length="238" mass="26006">MATPHINAEMGDFADVVLMPGDPLRAQYIAETFLEDARQVNNVRGMLGFTGTYKGRRISVMGHGMGIPSCSIYAKELITEFGVKKIIRIGSCGAVSEDVKIRDVVIGMGACTDSKVNRMRFKDHDFAAIADFDLVRHAVDAAKAKNINTRVGNIFSVDLFYSPDPQMFDVMEKYGILGVEMEAAGIYGVAAEFGAKALAICTVSDHIRTGEQTTAEERQHTFNDMIEIALESILLGDN</sequence>
<protein>
    <recommendedName>
        <fullName evidence="2">Purine nucleoside phosphorylase DeoD-type</fullName>
        <shortName evidence="2">PNP</shortName>
        <ecNumber evidence="2">2.4.2.1</ecNumber>
    </recommendedName>
</protein>
<feature type="chain" id="PRO_0000063180" description="Purine nucleoside phosphorylase DeoD-type">
    <location>
        <begin position="1"/>
        <end position="238"/>
    </location>
</feature>
<feature type="active site" description="Proton donor" evidence="2">
    <location>
        <position position="205"/>
    </location>
</feature>
<feature type="binding site" evidence="1">
    <location>
        <position position="5"/>
    </location>
    <ligand>
        <name>a purine D-ribonucleoside</name>
        <dbReference type="ChEBI" id="CHEBI:142355"/>
        <note>ligand shared between dimeric partners</note>
    </ligand>
</feature>
<feature type="binding site" description="in other chain" evidence="1">
    <location>
        <position position="21"/>
    </location>
    <ligand>
        <name>phosphate</name>
        <dbReference type="ChEBI" id="CHEBI:43474"/>
        <note>ligand shared between dimeric partners</note>
    </ligand>
</feature>
<feature type="binding site" description="in other chain" evidence="1">
    <location>
        <position position="25"/>
    </location>
    <ligand>
        <name>phosphate</name>
        <dbReference type="ChEBI" id="CHEBI:43474"/>
        <note>ligand shared between dimeric partners</note>
    </ligand>
</feature>
<feature type="binding site" evidence="1">
    <location>
        <position position="44"/>
    </location>
    <ligand>
        <name>phosphate</name>
        <dbReference type="ChEBI" id="CHEBI:43474"/>
        <note>ligand shared between dimeric partners</note>
    </ligand>
</feature>
<feature type="binding site" description="in other chain" evidence="1">
    <location>
        <begin position="88"/>
        <end position="91"/>
    </location>
    <ligand>
        <name>phosphate</name>
        <dbReference type="ChEBI" id="CHEBI:43474"/>
        <note>ligand shared between dimeric partners</note>
    </ligand>
</feature>
<feature type="binding site" description="in other chain" evidence="1">
    <location>
        <begin position="180"/>
        <end position="182"/>
    </location>
    <ligand>
        <name>a purine D-ribonucleoside</name>
        <dbReference type="ChEBI" id="CHEBI:142355"/>
        <note>ligand shared between dimeric partners</note>
    </ligand>
</feature>
<feature type="binding site" description="in other chain" evidence="1">
    <location>
        <begin position="204"/>
        <end position="205"/>
    </location>
    <ligand>
        <name>a purine D-ribonucleoside</name>
        <dbReference type="ChEBI" id="CHEBI:142355"/>
        <note>ligand shared between dimeric partners</note>
    </ligand>
</feature>
<feature type="site" description="Important for catalytic activity" evidence="2">
    <location>
        <position position="218"/>
    </location>
</feature>
<gene>
    <name evidence="2" type="primary">deoD</name>
    <name type="ordered locus">XNC1_3804</name>
</gene>
<keyword id="KW-0328">Glycosyltransferase</keyword>
<keyword id="KW-1185">Reference proteome</keyword>
<keyword id="KW-0808">Transferase</keyword>
<reference key="1">
    <citation type="journal article" date="2004" name="Microbiology">
        <title>Unique organization and regulation of the mrx fimbrial operon in Xenorhabdus nematophila.</title>
        <authorList>
            <person name="He H."/>
            <person name="Snyder H.A."/>
            <person name="Forst S."/>
        </authorList>
    </citation>
    <scope>NUCLEOTIDE SEQUENCE [GENOMIC DNA]</scope>
    <source>
        <strain>ATCC 19061 / DSM 3370 / CCUG 14189 / LMG 1036 / NCIMB 9965 / AN6</strain>
    </source>
</reference>
<reference key="2">
    <citation type="submission" date="2004-02" db="EMBL/GenBank/DDBJ databases">
        <title>dTMP synthesis in Xenorhabdus nematophila.</title>
        <authorList>
            <person name="Orchard S.S."/>
            <person name="Goodrich-Blair H."/>
        </authorList>
    </citation>
    <scope>NUCLEOTIDE SEQUENCE [GENOMIC DNA]</scope>
    <source>
        <strain>ATCC 19061 / DSM 3370 / CCUG 14189 / LMG 1036 / NCIMB 9965 / AN6</strain>
    </source>
</reference>
<reference key="3">
    <citation type="journal article" date="2011" name="PLoS ONE">
        <title>The entomopathogenic bacterial endosymbionts xenorhabdus and photorhabdus: convergent lifestyles from divergent genomes.</title>
        <authorList>
            <person name="Chaston J.M."/>
            <person name="Suen G."/>
            <person name="Tucker S.L."/>
            <person name="Andersen A.W."/>
            <person name="Bhasin A."/>
            <person name="Bode E."/>
            <person name="Bode H.B."/>
            <person name="Brachmann A.O."/>
            <person name="Cowles C.E."/>
            <person name="Cowles K.N."/>
            <person name="Darby C."/>
            <person name="de Leon L."/>
            <person name="Drace K."/>
            <person name="Du Z."/>
            <person name="Givaudan A."/>
            <person name="Herbert Tran E.E."/>
            <person name="Jewell K.A."/>
            <person name="Knack J.J."/>
            <person name="Krasomil-Osterfeld K.C."/>
            <person name="Kukor R."/>
            <person name="Lanois A."/>
            <person name="Latreille P."/>
            <person name="Leimgruber N.K."/>
            <person name="Lipke C.M."/>
            <person name="Liu R."/>
            <person name="Lu X."/>
            <person name="Martens E.C."/>
            <person name="Marri P.R."/>
            <person name="Medigue C."/>
            <person name="Menard M.L."/>
            <person name="Miller N.M."/>
            <person name="Morales-Soto N."/>
            <person name="Norton S."/>
            <person name="Ogier J.C."/>
            <person name="Orchard S.S."/>
            <person name="Park D."/>
            <person name="Park Y."/>
            <person name="Qurollo B.A."/>
            <person name="Sugar D.R."/>
            <person name="Richards G.R."/>
            <person name="Rouy Z."/>
            <person name="Slominski B."/>
            <person name="Slominski K."/>
            <person name="Snyder H."/>
            <person name="Tjaden B.C."/>
            <person name="van der Hoeven R."/>
            <person name="Welch R.D."/>
            <person name="Wheeler C."/>
            <person name="Xiang B."/>
            <person name="Barbazuk B."/>
            <person name="Gaudriault S."/>
            <person name="Goodner B."/>
            <person name="Slater S.C."/>
            <person name="Forst S."/>
            <person name="Goldman B.S."/>
            <person name="Goodrich-Blair H."/>
        </authorList>
    </citation>
    <scope>NUCLEOTIDE SEQUENCE [LARGE SCALE GENOMIC DNA]</scope>
    <source>
        <strain>ATCC 19061 / DSM 3370 / CCUG 14189 / LMG 1036 / NCIMB 9965 / AN6</strain>
    </source>
</reference>
<comment type="function">
    <text evidence="2">Catalyzes the reversible phosphorolytic breakdown of the N-glycosidic bond in the beta-(deoxy)ribonucleoside molecules, with the formation of the corresponding free purine bases and pentose-1-phosphate.</text>
</comment>
<comment type="catalytic activity">
    <reaction evidence="2">
        <text>a purine D-ribonucleoside + phosphate = a purine nucleobase + alpha-D-ribose 1-phosphate</text>
        <dbReference type="Rhea" id="RHEA:19805"/>
        <dbReference type="ChEBI" id="CHEBI:26386"/>
        <dbReference type="ChEBI" id="CHEBI:43474"/>
        <dbReference type="ChEBI" id="CHEBI:57720"/>
        <dbReference type="ChEBI" id="CHEBI:142355"/>
        <dbReference type="EC" id="2.4.2.1"/>
    </reaction>
</comment>
<comment type="catalytic activity">
    <reaction evidence="2">
        <text>a purine 2'-deoxy-D-ribonucleoside + phosphate = a purine nucleobase + 2-deoxy-alpha-D-ribose 1-phosphate</text>
        <dbReference type="Rhea" id="RHEA:36431"/>
        <dbReference type="ChEBI" id="CHEBI:26386"/>
        <dbReference type="ChEBI" id="CHEBI:43474"/>
        <dbReference type="ChEBI" id="CHEBI:57259"/>
        <dbReference type="ChEBI" id="CHEBI:142361"/>
        <dbReference type="EC" id="2.4.2.1"/>
    </reaction>
</comment>
<comment type="subunit">
    <text evidence="2">Homohexamer; trimer of homodimers.</text>
</comment>
<comment type="similarity">
    <text evidence="2">Belongs to the PNP/UDP phosphorylase family.</text>
</comment>
<organism>
    <name type="scientific">Xenorhabdus nematophila (strain ATCC 19061 / DSM 3370 / CCUG 14189 / LMG 1036 / NCIMB 9965 / AN6)</name>
    <dbReference type="NCBI Taxonomy" id="406817"/>
    <lineage>
        <taxon>Bacteria</taxon>
        <taxon>Pseudomonadati</taxon>
        <taxon>Pseudomonadota</taxon>
        <taxon>Gammaproteobacteria</taxon>
        <taxon>Enterobacterales</taxon>
        <taxon>Morganellaceae</taxon>
        <taxon>Xenorhabdus</taxon>
    </lineage>
</organism>
<dbReference type="EC" id="2.4.2.1" evidence="2"/>
<dbReference type="EMBL" id="AF525420">
    <property type="protein sequence ID" value="AAM91930.1"/>
    <property type="molecule type" value="Genomic_DNA"/>
</dbReference>
<dbReference type="EMBL" id="AY556400">
    <property type="protein sequence ID" value="AAT40584.1"/>
    <property type="molecule type" value="Genomic_DNA"/>
</dbReference>
<dbReference type="EMBL" id="FN667742">
    <property type="protein sequence ID" value="CBJ91835.1"/>
    <property type="molecule type" value="Genomic_DNA"/>
</dbReference>
<dbReference type="RefSeq" id="WP_010846305.1">
    <property type="nucleotide sequence ID" value="NC_014228.1"/>
</dbReference>
<dbReference type="SMR" id="Q8KRT5"/>
<dbReference type="STRING" id="406817.XNC1_3804"/>
<dbReference type="GeneID" id="24901955"/>
<dbReference type="KEGG" id="xne:XNC1_3804"/>
<dbReference type="eggNOG" id="COG0813">
    <property type="taxonomic scope" value="Bacteria"/>
</dbReference>
<dbReference type="HOGENOM" id="CLU_068457_2_0_6"/>
<dbReference type="Proteomes" id="UP000008075">
    <property type="component" value="Chromosome"/>
</dbReference>
<dbReference type="GO" id="GO:0005829">
    <property type="term" value="C:cytosol"/>
    <property type="evidence" value="ECO:0007669"/>
    <property type="project" value="TreeGrafter"/>
</dbReference>
<dbReference type="GO" id="GO:0004731">
    <property type="term" value="F:purine-nucleoside phosphorylase activity"/>
    <property type="evidence" value="ECO:0007669"/>
    <property type="project" value="UniProtKB-UniRule"/>
</dbReference>
<dbReference type="GO" id="GO:0006152">
    <property type="term" value="P:purine nucleoside catabolic process"/>
    <property type="evidence" value="ECO:0007669"/>
    <property type="project" value="TreeGrafter"/>
</dbReference>
<dbReference type="CDD" id="cd09006">
    <property type="entry name" value="PNP_EcPNPI-like"/>
    <property type="match status" value="1"/>
</dbReference>
<dbReference type="FunFam" id="3.40.50.1580:FF:000002">
    <property type="entry name" value="Purine nucleoside phosphorylase DeoD-type"/>
    <property type="match status" value="1"/>
</dbReference>
<dbReference type="Gene3D" id="3.40.50.1580">
    <property type="entry name" value="Nucleoside phosphorylase domain"/>
    <property type="match status" value="1"/>
</dbReference>
<dbReference type="HAMAP" id="MF_01627">
    <property type="entry name" value="Pur_nucleosid_phosp"/>
    <property type="match status" value="1"/>
</dbReference>
<dbReference type="InterPro" id="IPR004402">
    <property type="entry name" value="DeoD-type"/>
</dbReference>
<dbReference type="InterPro" id="IPR018016">
    <property type="entry name" value="Nucleoside_phosphorylase_CS"/>
</dbReference>
<dbReference type="InterPro" id="IPR000845">
    <property type="entry name" value="Nucleoside_phosphorylase_d"/>
</dbReference>
<dbReference type="InterPro" id="IPR035994">
    <property type="entry name" value="Nucleoside_phosphorylase_sf"/>
</dbReference>
<dbReference type="NCBIfam" id="TIGR00107">
    <property type="entry name" value="deoD"/>
    <property type="match status" value="1"/>
</dbReference>
<dbReference type="NCBIfam" id="NF004489">
    <property type="entry name" value="PRK05819.1"/>
    <property type="match status" value="1"/>
</dbReference>
<dbReference type="NCBIfam" id="NF009914">
    <property type="entry name" value="PRK13374.1"/>
    <property type="match status" value="1"/>
</dbReference>
<dbReference type="PANTHER" id="PTHR43691:SF2">
    <property type="entry name" value="PURINE NUCLEOSIDE PHOSPHORYLASE DEOD-TYPE"/>
    <property type="match status" value="1"/>
</dbReference>
<dbReference type="PANTHER" id="PTHR43691">
    <property type="entry name" value="URIDINE PHOSPHORYLASE"/>
    <property type="match status" value="1"/>
</dbReference>
<dbReference type="Pfam" id="PF01048">
    <property type="entry name" value="PNP_UDP_1"/>
    <property type="match status" value="1"/>
</dbReference>
<dbReference type="SUPFAM" id="SSF53167">
    <property type="entry name" value="Purine and uridine phosphorylases"/>
    <property type="match status" value="1"/>
</dbReference>
<dbReference type="PROSITE" id="PS01232">
    <property type="entry name" value="PNP_UDP_1"/>
    <property type="match status" value="1"/>
</dbReference>
<name>DEOD_XENNA</name>